<accession>Q819X4</accession>
<dbReference type="EC" id="2.1.1.74" evidence="1"/>
<dbReference type="EMBL" id="AE016877">
    <property type="protein sequence ID" value="AAP10752.1"/>
    <property type="molecule type" value="Genomic_DNA"/>
</dbReference>
<dbReference type="RefSeq" id="NP_833551.1">
    <property type="nucleotide sequence ID" value="NC_004722.1"/>
</dbReference>
<dbReference type="RefSeq" id="WP_000213003.1">
    <property type="nucleotide sequence ID" value="NZ_CP138336.1"/>
</dbReference>
<dbReference type="SMR" id="Q819X4"/>
<dbReference type="STRING" id="226900.BC_3830"/>
<dbReference type="KEGG" id="bce:BC3830"/>
<dbReference type="PATRIC" id="fig|226900.8.peg.3949"/>
<dbReference type="HOGENOM" id="CLU_033057_1_0_9"/>
<dbReference type="OrthoDB" id="9803114at2"/>
<dbReference type="Proteomes" id="UP000001417">
    <property type="component" value="Chromosome"/>
</dbReference>
<dbReference type="GO" id="GO:0005829">
    <property type="term" value="C:cytosol"/>
    <property type="evidence" value="ECO:0000318"/>
    <property type="project" value="GO_Central"/>
</dbReference>
<dbReference type="GO" id="GO:0050660">
    <property type="term" value="F:flavin adenine dinucleotide binding"/>
    <property type="evidence" value="ECO:0000318"/>
    <property type="project" value="GO_Central"/>
</dbReference>
<dbReference type="GO" id="GO:0047151">
    <property type="term" value="F:tRNA (uracil(54)-C5)-methyltransferase activity, 5,10-methylenetetrahydrofolate-dependent"/>
    <property type="evidence" value="ECO:0007669"/>
    <property type="project" value="UniProtKB-UniRule"/>
</dbReference>
<dbReference type="GO" id="GO:0030488">
    <property type="term" value="P:tRNA methylation"/>
    <property type="evidence" value="ECO:0000318"/>
    <property type="project" value="GO_Central"/>
</dbReference>
<dbReference type="GO" id="GO:0002098">
    <property type="term" value="P:tRNA wobble uridine modification"/>
    <property type="evidence" value="ECO:0000318"/>
    <property type="project" value="GO_Central"/>
</dbReference>
<dbReference type="FunFam" id="3.50.50.60:FF:000035">
    <property type="entry name" value="Methylenetetrahydrofolate--tRNA-(uracil-5-)-methyltransferase TrmFO"/>
    <property type="match status" value="1"/>
</dbReference>
<dbReference type="FunFam" id="3.50.50.60:FF:000040">
    <property type="entry name" value="Methylenetetrahydrofolate--tRNA-(uracil-5-)-methyltransferase TrmFO"/>
    <property type="match status" value="1"/>
</dbReference>
<dbReference type="Gene3D" id="3.50.50.60">
    <property type="entry name" value="FAD/NAD(P)-binding domain"/>
    <property type="match status" value="2"/>
</dbReference>
<dbReference type="HAMAP" id="MF_01037">
    <property type="entry name" value="TrmFO"/>
    <property type="match status" value="1"/>
</dbReference>
<dbReference type="InterPro" id="IPR036188">
    <property type="entry name" value="FAD/NAD-bd_sf"/>
</dbReference>
<dbReference type="InterPro" id="IPR002218">
    <property type="entry name" value="MnmG-rel"/>
</dbReference>
<dbReference type="InterPro" id="IPR020595">
    <property type="entry name" value="MnmG-rel_CS"/>
</dbReference>
<dbReference type="InterPro" id="IPR040131">
    <property type="entry name" value="MnmG_N"/>
</dbReference>
<dbReference type="InterPro" id="IPR004417">
    <property type="entry name" value="TrmFO"/>
</dbReference>
<dbReference type="NCBIfam" id="TIGR00137">
    <property type="entry name" value="gid_trmFO"/>
    <property type="match status" value="1"/>
</dbReference>
<dbReference type="NCBIfam" id="NF003739">
    <property type="entry name" value="PRK05335.1"/>
    <property type="match status" value="1"/>
</dbReference>
<dbReference type="PANTHER" id="PTHR11806">
    <property type="entry name" value="GLUCOSE INHIBITED DIVISION PROTEIN A"/>
    <property type="match status" value="1"/>
</dbReference>
<dbReference type="PANTHER" id="PTHR11806:SF2">
    <property type="entry name" value="METHYLENETETRAHYDROFOLATE--TRNA-(URACIL-5-)-METHYLTRANSFERASE TRMFO"/>
    <property type="match status" value="1"/>
</dbReference>
<dbReference type="Pfam" id="PF01134">
    <property type="entry name" value="GIDA"/>
    <property type="match status" value="1"/>
</dbReference>
<dbReference type="SUPFAM" id="SSF51905">
    <property type="entry name" value="FAD/NAD(P)-binding domain"/>
    <property type="match status" value="1"/>
</dbReference>
<dbReference type="PROSITE" id="PS01281">
    <property type="entry name" value="GIDA_2"/>
    <property type="match status" value="1"/>
</dbReference>
<sequence length="434" mass="48022">MTTQVVNVIGAGLAGSEAAYQIAKRGVQVRLYEMRPVRQTPAHHTDKFAELVCSNSLRANTLTNAVGVIKEEMRLMDSVIIRAADECSVPAGGALAVDRHEFAAKVTEYVKNHPNVTVMNEEITDIPEGPTIIATGPLTSPDLSAKLKELTGEDYFYFYDAAAPIVEKDSIDMNKVYLKSRYDKGEAAYLNCPMTEEEFDRFYEALIAAETVPLKEFEKEIFFEGCMPVEVMASRGRQTLVFGPMKPVGLEDPKTGKTPYAVVQLRQDDAAGTLYNIVGFQTHLKWGPQKEVLQLIPGLENAEIVRYGVMHRNTFINSPNLLRPTYQYKQRDDLFFAGQMTGVEGYVESAASGLLAGINAARLVQGEEPVVLPPVTAMGSMANYITATNAKNFQPMNANFGLFAPLEKKIKKKVERNEAYAARALETIRNFVNI</sequence>
<organism>
    <name type="scientific">Bacillus cereus (strain ATCC 14579 / DSM 31 / CCUG 7414 / JCM 2152 / NBRC 15305 / NCIMB 9373 / NCTC 2599 / NRRL B-3711)</name>
    <dbReference type="NCBI Taxonomy" id="226900"/>
    <lineage>
        <taxon>Bacteria</taxon>
        <taxon>Bacillati</taxon>
        <taxon>Bacillota</taxon>
        <taxon>Bacilli</taxon>
        <taxon>Bacillales</taxon>
        <taxon>Bacillaceae</taxon>
        <taxon>Bacillus</taxon>
        <taxon>Bacillus cereus group</taxon>
    </lineage>
</organism>
<keyword id="KW-0963">Cytoplasm</keyword>
<keyword id="KW-0274">FAD</keyword>
<keyword id="KW-0285">Flavoprotein</keyword>
<keyword id="KW-0489">Methyltransferase</keyword>
<keyword id="KW-0520">NAD</keyword>
<keyword id="KW-0521">NADP</keyword>
<keyword id="KW-1185">Reference proteome</keyword>
<keyword id="KW-0808">Transferase</keyword>
<keyword id="KW-0819">tRNA processing</keyword>
<gene>
    <name evidence="1" type="primary">trmFO</name>
    <name type="synonym">gid</name>
    <name type="ordered locus">BC_3830</name>
</gene>
<evidence type="ECO:0000255" key="1">
    <source>
        <dbReference type="HAMAP-Rule" id="MF_01037"/>
    </source>
</evidence>
<proteinExistence type="inferred from homology"/>
<name>TRMFO_BACCR</name>
<feature type="chain" id="PRO_0000117230" description="Methylenetetrahydrofolate--tRNA-(uracil-5-)-methyltransferase TrmFO">
    <location>
        <begin position="1"/>
        <end position="434"/>
    </location>
</feature>
<feature type="binding site" evidence="1">
    <location>
        <begin position="10"/>
        <end position="15"/>
    </location>
    <ligand>
        <name>FAD</name>
        <dbReference type="ChEBI" id="CHEBI:57692"/>
    </ligand>
</feature>
<protein>
    <recommendedName>
        <fullName evidence="1">Methylenetetrahydrofolate--tRNA-(uracil-5-)-methyltransferase TrmFO</fullName>
        <ecNumber evidence="1">2.1.1.74</ecNumber>
    </recommendedName>
    <alternativeName>
        <fullName evidence="1">Folate-dependent tRNA (uracil-5-)-methyltransferase</fullName>
    </alternativeName>
    <alternativeName>
        <fullName evidence="1">Folate-dependent tRNA(M-5-U54)-methyltransferase</fullName>
    </alternativeName>
</protein>
<comment type="function">
    <text evidence="1">Catalyzes the folate-dependent formation of 5-methyl-uridine at position 54 (M-5-U54) in all tRNAs.</text>
</comment>
<comment type="catalytic activity">
    <reaction evidence="1">
        <text>uridine(54) in tRNA + (6R)-5,10-methylene-5,6,7,8-tetrahydrofolate + NADH + H(+) = 5-methyluridine(54) in tRNA + (6S)-5,6,7,8-tetrahydrofolate + NAD(+)</text>
        <dbReference type="Rhea" id="RHEA:16873"/>
        <dbReference type="Rhea" id="RHEA-COMP:10167"/>
        <dbReference type="Rhea" id="RHEA-COMP:10193"/>
        <dbReference type="ChEBI" id="CHEBI:15378"/>
        <dbReference type="ChEBI" id="CHEBI:15636"/>
        <dbReference type="ChEBI" id="CHEBI:57453"/>
        <dbReference type="ChEBI" id="CHEBI:57540"/>
        <dbReference type="ChEBI" id="CHEBI:57945"/>
        <dbReference type="ChEBI" id="CHEBI:65315"/>
        <dbReference type="ChEBI" id="CHEBI:74447"/>
        <dbReference type="EC" id="2.1.1.74"/>
    </reaction>
</comment>
<comment type="catalytic activity">
    <reaction evidence="1">
        <text>uridine(54) in tRNA + (6R)-5,10-methylene-5,6,7,8-tetrahydrofolate + NADPH + H(+) = 5-methyluridine(54) in tRNA + (6S)-5,6,7,8-tetrahydrofolate + NADP(+)</text>
        <dbReference type="Rhea" id="RHEA:62372"/>
        <dbReference type="Rhea" id="RHEA-COMP:10167"/>
        <dbReference type="Rhea" id="RHEA-COMP:10193"/>
        <dbReference type="ChEBI" id="CHEBI:15378"/>
        <dbReference type="ChEBI" id="CHEBI:15636"/>
        <dbReference type="ChEBI" id="CHEBI:57453"/>
        <dbReference type="ChEBI" id="CHEBI:57783"/>
        <dbReference type="ChEBI" id="CHEBI:58349"/>
        <dbReference type="ChEBI" id="CHEBI:65315"/>
        <dbReference type="ChEBI" id="CHEBI:74447"/>
        <dbReference type="EC" id="2.1.1.74"/>
    </reaction>
</comment>
<comment type="cofactor">
    <cofactor evidence="1">
        <name>FAD</name>
        <dbReference type="ChEBI" id="CHEBI:57692"/>
    </cofactor>
</comment>
<comment type="subcellular location">
    <subcellularLocation>
        <location evidence="1">Cytoplasm</location>
    </subcellularLocation>
</comment>
<comment type="similarity">
    <text evidence="1">Belongs to the MnmG family. TrmFO subfamily.</text>
</comment>
<reference key="1">
    <citation type="journal article" date="2003" name="Nature">
        <title>Genome sequence of Bacillus cereus and comparative analysis with Bacillus anthracis.</title>
        <authorList>
            <person name="Ivanova N."/>
            <person name="Sorokin A."/>
            <person name="Anderson I."/>
            <person name="Galleron N."/>
            <person name="Candelon B."/>
            <person name="Kapatral V."/>
            <person name="Bhattacharyya A."/>
            <person name="Reznik G."/>
            <person name="Mikhailova N."/>
            <person name="Lapidus A."/>
            <person name="Chu L."/>
            <person name="Mazur M."/>
            <person name="Goltsman E."/>
            <person name="Larsen N."/>
            <person name="D'Souza M."/>
            <person name="Walunas T."/>
            <person name="Grechkin Y."/>
            <person name="Pusch G."/>
            <person name="Haselkorn R."/>
            <person name="Fonstein M."/>
            <person name="Ehrlich S.D."/>
            <person name="Overbeek R."/>
            <person name="Kyrpides N.C."/>
        </authorList>
    </citation>
    <scope>NUCLEOTIDE SEQUENCE [LARGE SCALE GENOMIC DNA]</scope>
    <source>
        <strain>ATCC 14579 / DSM 31 / CCUG 7414 / JCM 2152 / NBRC 15305 / NCIMB 9373 / NCTC 2599 / NRRL B-3711</strain>
    </source>
</reference>